<name>PANE_VIBCH</name>
<sequence length="296" mass="32201">MNIVVLGPGAVGSLWALHLHSAGHQVALWSRQAQPTITLQLDEEAPISFRNQNLDTLIHADLLLITVKAWQVEAALQPLLPHLNRETILLFMHNGMGAVEAISESLTHFPVLFATTTHGALKATLNQVSHTGFGQTQVGPFNALGARCDFIADVFNHALAPVTWNPEIQQALWRKLAVNCAINPLTAIHQCANGALVAPEFTPIITAILDEVTAVMQAEAISGEAEALRDGVYQVIQATAANLSSMHQDVFHRRPTEIDFITGYVVRKGEQHGIATPVNSALYQQIKTLEQSWSKA</sequence>
<comment type="function">
    <text evidence="1">Catalyzes the NADPH-dependent reduction of ketopantoate into pantoic acid.</text>
</comment>
<comment type="catalytic activity">
    <reaction evidence="1">
        <text>(R)-pantoate + NADP(+) = 2-dehydropantoate + NADPH + H(+)</text>
        <dbReference type="Rhea" id="RHEA:16233"/>
        <dbReference type="ChEBI" id="CHEBI:11561"/>
        <dbReference type="ChEBI" id="CHEBI:15378"/>
        <dbReference type="ChEBI" id="CHEBI:15980"/>
        <dbReference type="ChEBI" id="CHEBI:57783"/>
        <dbReference type="ChEBI" id="CHEBI:58349"/>
        <dbReference type="EC" id="1.1.1.169"/>
    </reaction>
</comment>
<comment type="pathway">
    <text evidence="1">Cofactor biosynthesis; (R)-pantothenate biosynthesis; (R)-pantoate from 3-methyl-2-oxobutanoate: step 2/2.</text>
</comment>
<comment type="subcellular location">
    <subcellularLocation>
        <location evidence="1">Cytoplasm</location>
    </subcellularLocation>
</comment>
<comment type="similarity">
    <text evidence="2">Belongs to the ketopantoate reductase family.</text>
</comment>
<proteinExistence type="inferred from homology"/>
<protein>
    <recommendedName>
        <fullName evidence="1">2-dehydropantoate 2-reductase</fullName>
        <ecNumber evidence="1">1.1.1.169</ecNumber>
    </recommendedName>
    <alternativeName>
        <fullName evidence="1">Ketopantoate reductase</fullName>
        <shortName evidence="1">KPR</shortName>
    </alternativeName>
</protein>
<dbReference type="EC" id="1.1.1.169" evidence="1"/>
<dbReference type="EMBL" id="AE003852">
    <property type="protein sequence ID" value="AAF95451.1"/>
    <property type="molecule type" value="Genomic_DNA"/>
</dbReference>
<dbReference type="PIR" id="D82092">
    <property type="entry name" value="D82092"/>
</dbReference>
<dbReference type="RefSeq" id="NP_231938.1">
    <property type="nucleotide sequence ID" value="NC_002505.1"/>
</dbReference>
<dbReference type="RefSeq" id="WP_001028571.1">
    <property type="nucleotide sequence ID" value="NZ_LT906614.1"/>
</dbReference>
<dbReference type="SMR" id="Q9KPQ9"/>
<dbReference type="STRING" id="243277.VC_2307"/>
<dbReference type="DNASU" id="2613103"/>
<dbReference type="EnsemblBacteria" id="AAF95451">
    <property type="protein sequence ID" value="AAF95451"/>
    <property type="gene ID" value="VC_2307"/>
</dbReference>
<dbReference type="KEGG" id="vch:VC_2307"/>
<dbReference type="PATRIC" id="fig|243277.26.peg.2199"/>
<dbReference type="eggNOG" id="COG1893">
    <property type="taxonomic scope" value="Bacteria"/>
</dbReference>
<dbReference type="HOGENOM" id="CLU_031468_0_1_6"/>
<dbReference type="UniPathway" id="UPA00028">
    <property type="reaction ID" value="UER00004"/>
</dbReference>
<dbReference type="Proteomes" id="UP000000584">
    <property type="component" value="Chromosome 1"/>
</dbReference>
<dbReference type="GO" id="GO:0005737">
    <property type="term" value="C:cytoplasm"/>
    <property type="evidence" value="ECO:0000318"/>
    <property type="project" value="GO_Central"/>
</dbReference>
<dbReference type="GO" id="GO:0008677">
    <property type="term" value="F:2-dehydropantoate 2-reductase activity"/>
    <property type="evidence" value="ECO:0000318"/>
    <property type="project" value="GO_Central"/>
</dbReference>
<dbReference type="GO" id="GO:0050661">
    <property type="term" value="F:NADP binding"/>
    <property type="evidence" value="ECO:0000318"/>
    <property type="project" value="GO_Central"/>
</dbReference>
<dbReference type="GO" id="GO:0015940">
    <property type="term" value="P:pantothenate biosynthetic process"/>
    <property type="evidence" value="ECO:0007669"/>
    <property type="project" value="UniProtKB-UniPathway"/>
</dbReference>
<dbReference type="FunFam" id="1.10.1040.10:FF:000014">
    <property type="entry name" value="2-dehydropantoate 2-reductase"/>
    <property type="match status" value="1"/>
</dbReference>
<dbReference type="Gene3D" id="1.10.1040.10">
    <property type="entry name" value="N-(1-d-carboxylethyl)-l-norvaline Dehydrogenase, domain 2"/>
    <property type="match status" value="1"/>
</dbReference>
<dbReference type="Gene3D" id="3.40.50.720">
    <property type="entry name" value="NAD(P)-binding Rossmann-like Domain"/>
    <property type="match status" value="1"/>
</dbReference>
<dbReference type="InterPro" id="IPR008927">
    <property type="entry name" value="6-PGluconate_DH-like_C_sf"/>
</dbReference>
<dbReference type="InterPro" id="IPR013328">
    <property type="entry name" value="6PGD_dom2"/>
</dbReference>
<dbReference type="InterPro" id="IPR003710">
    <property type="entry name" value="ApbA"/>
</dbReference>
<dbReference type="InterPro" id="IPR050838">
    <property type="entry name" value="Ketopantoate_reductase"/>
</dbReference>
<dbReference type="InterPro" id="IPR013752">
    <property type="entry name" value="KPA_reductase"/>
</dbReference>
<dbReference type="InterPro" id="IPR013332">
    <property type="entry name" value="KPR_N"/>
</dbReference>
<dbReference type="InterPro" id="IPR036291">
    <property type="entry name" value="NAD(P)-bd_dom_sf"/>
</dbReference>
<dbReference type="NCBIfam" id="TIGR00745">
    <property type="entry name" value="apbA_panE"/>
    <property type="match status" value="1"/>
</dbReference>
<dbReference type="NCBIfam" id="NF005087">
    <property type="entry name" value="PRK06522.1-1"/>
    <property type="match status" value="1"/>
</dbReference>
<dbReference type="PANTHER" id="PTHR43765:SF2">
    <property type="entry name" value="2-DEHYDROPANTOATE 2-REDUCTASE"/>
    <property type="match status" value="1"/>
</dbReference>
<dbReference type="PANTHER" id="PTHR43765">
    <property type="entry name" value="2-DEHYDROPANTOATE 2-REDUCTASE-RELATED"/>
    <property type="match status" value="1"/>
</dbReference>
<dbReference type="Pfam" id="PF02558">
    <property type="entry name" value="ApbA"/>
    <property type="match status" value="1"/>
</dbReference>
<dbReference type="Pfam" id="PF08546">
    <property type="entry name" value="ApbA_C"/>
    <property type="match status" value="1"/>
</dbReference>
<dbReference type="SUPFAM" id="SSF48179">
    <property type="entry name" value="6-phosphogluconate dehydrogenase C-terminal domain-like"/>
    <property type="match status" value="1"/>
</dbReference>
<dbReference type="SUPFAM" id="SSF51735">
    <property type="entry name" value="NAD(P)-binding Rossmann-fold domains"/>
    <property type="match status" value="1"/>
</dbReference>
<accession>Q9KPQ9</accession>
<keyword id="KW-0963">Cytoplasm</keyword>
<keyword id="KW-0521">NADP</keyword>
<keyword id="KW-0560">Oxidoreductase</keyword>
<keyword id="KW-0566">Pantothenate biosynthesis</keyword>
<keyword id="KW-1185">Reference proteome</keyword>
<feature type="chain" id="PRO_0000157306" description="2-dehydropantoate 2-reductase">
    <location>
        <begin position="1"/>
        <end position="296"/>
    </location>
</feature>
<feature type="active site" description="Proton donor" evidence="1">
    <location>
        <position position="175"/>
    </location>
</feature>
<feature type="binding site" evidence="1">
    <location>
        <begin position="7"/>
        <end position="12"/>
    </location>
    <ligand>
        <name>NADP(+)</name>
        <dbReference type="ChEBI" id="CHEBI:58349"/>
    </ligand>
</feature>
<feature type="binding site" evidence="1">
    <location>
        <position position="94"/>
    </location>
    <ligand>
        <name>NADP(+)</name>
        <dbReference type="ChEBI" id="CHEBI:58349"/>
    </ligand>
</feature>
<feature type="binding site" evidence="1">
    <location>
        <position position="94"/>
    </location>
    <ligand>
        <name>substrate</name>
    </ligand>
</feature>
<feature type="binding site" evidence="1">
    <location>
        <position position="120"/>
    </location>
    <ligand>
        <name>NADP(+)</name>
        <dbReference type="ChEBI" id="CHEBI:58349"/>
    </ligand>
</feature>
<feature type="binding site" evidence="1">
    <location>
        <position position="179"/>
    </location>
    <ligand>
        <name>substrate</name>
    </ligand>
</feature>
<feature type="binding site" evidence="1">
    <location>
        <position position="183"/>
    </location>
    <ligand>
        <name>substrate</name>
    </ligand>
</feature>
<feature type="binding site" evidence="1">
    <location>
        <position position="193"/>
    </location>
    <ligand>
        <name>substrate</name>
    </ligand>
</feature>
<feature type="binding site" evidence="1">
    <location>
        <position position="245"/>
    </location>
    <ligand>
        <name>substrate</name>
    </ligand>
</feature>
<feature type="binding site" evidence="1">
    <location>
        <position position="257"/>
    </location>
    <ligand>
        <name>NADP(+)</name>
        <dbReference type="ChEBI" id="CHEBI:58349"/>
    </ligand>
</feature>
<evidence type="ECO:0000250" key="1">
    <source>
        <dbReference type="UniProtKB" id="P0A9J4"/>
    </source>
</evidence>
<evidence type="ECO:0000305" key="2"/>
<organism>
    <name type="scientific">Vibrio cholerae serotype O1 (strain ATCC 39315 / El Tor Inaba N16961)</name>
    <dbReference type="NCBI Taxonomy" id="243277"/>
    <lineage>
        <taxon>Bacteria</taxon>
        <taxon>Pseudomonadati</taxon>
        <taxon>Pseudomonadota</taxon>
        <taxon>Gammaproteobacteria</taxon>
        <taxon>Vibrionales</taxon>
        <taxon>Vibrionaceae</taxon>
        <taxon>Vibrio</taxon>
    </lineage>
</organism>
<gene>
    <name type="primary">panE</name>
    <name type="ordered locus">VC_2307</name>
</gene>
<reference key="1">
    <citation type="journal article" date="2000" name="Nature">
        <title>DNA sequence of both chromosomes of the cholera pathogen Vibrio cholerae.</title>
        <authorList>
            <person name="Heidelberg J.F."/>
            <person name="Eisen J.A."/>
            <person name="Nelson W.C."/>
            <person name="Clayton R.A."/>
            <person name="Gwinn M.L."/>
            <person name="Dodson R.J."/>
            <person name="Haft D.H."/>
            <person name="Hickey E.K."/>
            <person name="Peterson J.D."/>
            <person name="Umayam L.A."/>
            <person name="Gill S.R."/>
            <person name="Nelson K.E."/>
            <person name="Read T.D."/>
            <person name="Tettelin H."/>
            <person name="Richardson D.L."/>
            <person name="Ermolaeva M.D."/>
            <person name="Vamathevan J.J."/>
            <person name="Bass S."/>
            <person name="Qin H."/>
            <person name="Dragoi I."/>
            <person name="Sellers P."/>
            <person name="McDonald L.A."/>
            <person name="Utterback T.R."/>
            <person name="Fleischmann R.D."/>
            <person name="Nierman W.C."/>
            <person name="White O."/>
            <person name="Salzberg S.L."/>
            <person name="Smith H.O."/>
            <person name="Colwell R.R."/>
            <person name="Mekalanos J.J."/>
            <person name="Venter J.C."/>
            <person name="Fraser C.M."/>
        </authorList>
    </citation>
    <scope>NUCLEOTIDE SEQUENCE [LARGE SCALE GENOMIC DNA]</scope>
    <source>
        <strain>ATCC 39315 / El Tor Inaba N16961</strain>
    </source>
</reference>